<reference key="1">
    <citation type="journal article" date="2005" name="BMC Genomics">
        <title>Bacterial genome adaptation to niches: divergence of the potential virulence genes in three Burkholderia species of different survival strategies.</title>
        <authorList>
            <person name="Kim H.S."/>
            <person name="Schell M.A."/>
            <person name="Yu Y."/>
            <person name="Ulrich R.L."/>
            <person name="Sarria S.H."/>
            <person name="Nierman W.C."/>
            <person name="DeShazer D."/>
        </authorList>
    </citation>
    <scope>NUCLEOTIDE SEQUENCE [LARGE SCALE GENOMIC DNA]</scope>
    <source>
        <strain>ATCC 700388 / DSM 13276 / CCUG 48851 / CIP 106301 / E264</strain>
    </source>
</reference>
<comment type="catalytic activity">
    <reaction evidence="1">
        <text>tRNA(Phe) + L-phenylalanine + ATP = L-phenylalanyl-tRNA(Phe) + AMP + diphosphate + H(+)</text>
        <dbReference type="Rhea" id="RHEA:19413"/>
        <dbReference type="Rhea" id="RHEA-COMP:9668"/>
        <dbReference type="Rhea" id="RHEA-COMP:9699"/>
        <dbReference type="ChEBI" id="CHEBI:15378"/>
        <dbReference type="ChEBI" id="CHEBI:30616"/>
        <dbReference type="ChEBI" id="CHEBI:33019"/>
        <dbReference type="ChEBI" id="CHEBI:58095"/>
        <dbReference type="ChEBI" id="CHEBI:78442"/>
        <dbReference type="ChEBI" id="CHEBI:78531"/>
        <dbReference type="ChEBI" id="CHEBI:456215"/>
        <dbReference type="EC" id="6.1.1.20"/>
    </reaction>
</comment>
<comment type="cofactor">
    <cofactor evidence="1">
        <name>Mg(2+)</name>
        <dbReference type="ChEBI" id="CHEBI:18420"/>
    </cofactor>
    <text evidence="1">Binds 2 magnesium ions per tetramer.</text>
</comment>
<comment type="subunit">
    <text evidence="1">Tetramer of two alpha and two beta subunits.</text>
</comment>
<comment type="subcellular location">
    <subcellularLocation>
        <location evidence="1">Cytoplasm</location>
    </subcellularLocation>
</comment>
<comment type="similarity">
    <text evidence="1">Belongs to the class-II aminoacyl-tRNA synthetase family. Phe-tRNA synthetase alpha subunit type 1 subfamily.</text>
</comment>
<protein>
    <recommendedName>
        <fullName evidence="1">Phenylalanine--tRNA ligase alpha subunit</fullName>
        <ecNumber evidence="1">6.1.1.20</ecNumber>
    </recommendedName>
    <alternativeName>
        <fullName evidence="1">Phenylalanyl-tRNA synthetase alpha subunit</fullName>
        <shortName evidence="1">PheRS</shortName>
    </alternativeName>
</protein>
<proteinExistence type="inferred from homology"/>
<organism>
    <name type="scientific">Burkholderia thailandensis (strain ATCC 700388 / DSM 13276 / CCUG 48851 / CIP 106301 / E264)</name>
    <dbReference type="NCBI Taxonomy" id="271848"/>
    <lineage>
        <taxon>Bacteria</taxon>
        <taxon>Pseudomonadati</taxon>
        <taxon>Pseudomonadota</taxon>
        <taxon>Betaproteobacteria</taxon>
        <taxon>Burkholderiales</taxon>
        <taxon>Burkholderiaceae</taxon>
        <taxon>Burkholderia</taxon>
        <taxon>pseudomallei group</taxon>
    </lineage>
</organism>
<gene>
    <name evidence="1" type="primary">pheS</name>
    <name type="ordered locus">BTH_I2591</name>
</gene>
<feature type="chain" id="PRO_1000006807" description="Phenylalanine--tRNA ligase alpha subunit">
    <location>
        <begin position="1"/>
        <end position="337"/>
    </location>
</feature>
<feature type="binding site" evidence="1">
    <location>
        <position position="258"/>
    </location>
    <ligand>
        <name>Mg(2+)</name>
        <dbReference type="ChEBI" id="CHEBI:18420"/>
        <note>shared with beta subunit</note>
    </ligand>
</feature>
<name>SYFA_BURTA</name>
<dbReference type="EC" id="6.1.1.20" evidence="1"/>
<dbReference type="EMBL" id="CP000086">
    <property type="protein sequence ID" value="ABC37084.1"/>
    <property type="molecule type" value="Genomic_DNA"/>
</dbReference>
<dbReference type="RefSeq" id="WP_009891560.1">
    <property type="nucleotide sequence ID" value="NZ_CP008785.1"/>
</dbReference>
<dbReference type="SMR" id="Q2SVE2"/>
<dbReference type="GeneID" id="45122298"/>
<dbReference type="KEGG" id="bte:BTH_I2591"/>
<dbReference type="HOGENOM" id="CLU_025086_0_1_4"/>
<dbReference type="Proteomes" id="UP000001930">
    <property type="component" value="Chromosome I"/>
</dbReference>
<dbReference type="GO" id="GO:0005737">
    <property type="term" value="C:cytoplasm"/>
    <property type="evidence" value="ECO:0007669"/>
    <property type="project" value="UniProtKB-SubCell"/>
</dbReference>
<dbReference type="GO" id="GO:0005524">
    <property type="term" value="F:ATP binding"/>
    <property type="evidence" value="ECO:0007669"/>
    <property type="project" value="UniProtKB-UniRule"/>
</dbReference>
<dbReference type="GO" id="GO:0000287">
    <property type="term" value="F:magnesium ion binding"/>
    <property type="evidence" value="ECO:0007669"/>
    <property type="project" value="UniProtKB-UniRule"/>
</dbReference>
<dbReference type="GO" id="GO:0004826">
    <property type="term" value="F:phenylalanine-tRNA ligase activity"/>
    <property type="evidence" value="ECO:0007669"/>
    <property type="project" value="UniProtKB-UniRule"/>
</dbReference>
<dbReference type="GO" id="GO:0000049">
    <property type="term" value="F:tRNA binding"/>
    <property type="evidence" value="ECO:0007669"/>
    <property type="project" value="InterPro"/>
</dbReference>
<dbReference type="GO" id="GO:0006432">
    <property type="term" value="P:phenylalanyl-tRNA aminoacylation"/>
    <property type="evidence" value="ECO:0007669"/>
    <property type="project" value="UniProtKB-UniRule"/>
</dbReference>
<dbReference type="CDD" id="cd00496">
    <property type="entry name" value="PheRS_alpha_core"/>
    <property type="match status" value="1"/>
</dbReference>
<dbReference type="FunFam" id="3.30.930.10:FF:000003">
    <property type="entry name" value="Phenylalanine--tRNA ligase alpha subunit"/>
    <property type="match status" value="1"/>
</dbReference>
<dbReference type="Gene3D" id="3.30.930.10">
    <property type="entry name" value="Bira Bifunctional Protein, Domain 2"/>
    <property type="match status" value="1"/>
</dbReference>
<dbReference type="HAMAP" id="MF_00281">
    <property type="entry name" value="Phe_tRNA_synth_alpha1"/>
    <property type="match status" value="1"/>
</dbReference>
<dbReference type="InterPro" id="IPR006195">
    <property type="entry name" value="aa-tRNA-synth_II"/>
</dbReference>
<dbReference type="InterPro" id="IPR045864">
    <property type="entry name" value="aa-tRNA-synth_II/BPL/LPL"/>
</dbReference>
<dbReference type="InterPro" id="IPR004529">
    <property type="entry name" value="Phe-tRNA-synth_IIc_asu"/>
</dbReference>
<dbReference type="InterPro" id="IPR004188">
    <property type="entry name" value="Phe-tRNA_ligase_II_N"/>
</dbReference>
<dbReference type="InterPro" id="IPR022911">
    <property type="entry name" value="Phe_tRNA_ligase_alpha1_bac"/>
</dbReference>
<dbReference type="InterPro" id="IPR002319">
    <property type="entry name" value="Phenylalanyl-tRNA_Synthase"/>
</dbReference>
<dbReference type="InterPro" id="IPR010978">
    <property type="entry name" value="tRNA-bd_arm"/>
</dbReference>
<dbReference type="NCBIfam" id="TIGR00468">
    <property type="entry name" value="pheS"/>
    <property type="match status" value="1"/>
</dbReference>
<dbReference type="PANTHER" id="PTHR11538:SF41">
    <property type="entry name" value="PHENYLALANINE--TRNA LIGASE, MITOCHONDRIAL"/>
    <property type="match status" value="1"/>
</dbReference>
<dbReference type="PANTHER" id="PTHR11538">
    <property type="entry name" value="PHENYLALANYL-TRNA SYNTHETASE"/>
    <property type="match status" value="1"/>
</dbReference>
<dbReference type="Pfam" id="PF02912">
    <property type="entry name" value="Phe_tRNA-synt_N"/>
    <property type="match status" value="1"/>
</dbReference>
<dbReference type="Pfam" id="PF01409">
    <property type="entry name" value="tRNA-synt_2d"/>
    <property type="match status" value="1"/>
</dbReference>
<dbReference type="SUPFAM" id="SSF55681">
    <property type="entry name" value="Class II aaRS and biotin synthetases"/>
    <property type="match status" value="1"/>
</dbReference>
<dbReference type="SUPFAM" id="SSF46589">
    <property type="entry name" value="tRNA-binding arm"/>
    <property type="match status" value="1"/>
</dbReference>
<dbReference type="PROSITE" id="PS50862">
    <property type="entry name" value="AA_TRNA_LIGASE_II"/>
    <property type="match status" value="1"/>
</dbReference>
<sequence length="337" mass="38053">MDLDQIVADAQQSFEGAADITTLENEKARFLGKSGALTELLKGLGKLDPEARKTEGARINVAKQQVEAALNARRQALADALLNQRLAAEAIDVTLPGRGAGAGSLHPVMRTWERVEQIFRSIGFDVADGPEIETDWYNFTALNSPENHPARSMQDTFYVDGKDADGRRLLLRTHTSPMQVRYARMNRPPIKVIAPGRTYRVDSDATHSPMFNQVEGLWIDENVSFADLKGVYTDFLKKFFERDDILVRFRPSYFPFTEPSAEIDMMFEHGKNAGKWLEISGSGQVHPTVIRNMGLDPERYIGFAFGSGLERLTMLRYGVQDLRLFFENDLRFLRQFA</sequence>
<accession>Q2SVE2</accession>
<evidence type="ECO:0000255" key="1">
    <source>
        <dbReference type="HAMAP-Rule" id="MF_00281"/>
    </source>
</evidence>
<keyword id="KW-0030">Aminoacyl-tRNA synthetase</keyword>
<keyword id="KW-0067">ATP-binding</keyword>
<keyword id="KW-0963">Cytoplasm</keyword>
<keyword id="KW-0436">Ligase</keyword>
<keyword id="KW-0460">Magnesium</keyword>
<keyword id="KW-0479">Metal-binding</keyword>
<keyword id="KW-0547">Nucleotide-binding</keyword>
<keyword id="KW-0648">Protein biosynthesis</keyword>